<organism>
    <name type="scientific">Shigella sonnei (strain Ss046)</name>
    <dbReference type="NCBI Taxonomy" id="300269"/>
    <lineage>
        <taxon>Bacteria</taxon>
        <taxon>Pseudomonadati</taxon>
        <taxon>Pseudomonadota</taxon>
        <taxon>Gammaproteobacteria</taxon>
        <taxon>Enterobacterales</taxon>
        <taxon>Enterobacteriaceae</taxon>
        <taxon>Shigella</taxon>
    </lineage>
</organism>
<dbReference type="EC" id="1.1.1.37" evidence="1"/>
<dbReference type="EMBL" id="CP000038">
    <property type="protein sequence ID" value="AAZ89951.1"/>
    <property type="molecule type" value="Genomic_DNA"/>
</dbReference>
<dbReference type="RefSeq" id="WP_001295272.1">
    <property type="nucleotide sequence ID" value="NC_007384.1"/>
</dbReference>
<dbReference type="SMR" id="Q3YX11"/>
<dbReference type="GeneID" id="93778749"/>
<dbReference type="KEGG" id="ssn:SSON_3378"/>
<dbReference type="HOGENOM" id="CLU_047181_0_1_6"/>
<dbReference type="Proteomes" id="UP000002529">
    <property type="component" value="Chromosome"/>
</dbReference>
<dbReference type="GO" id="GO:0005737">
    <property type="term" value="C:cytoplasm"/>
    <property type="evidence" value="ECO:0007669"/>
    <property type="project" value="TreeGrafter"/>
</dbReference>
<dbReference type="GO" id="GO:0030060">
    <property type="term" value="F:L-malate dehydrogenase (NAD+) activity"/>
    <property type="evidence" value="ECO:0007669"/>
    <property type="project" value="UniProtKB-UniRule"/>
</dbReference>
<dbReference type="GO" id="GO:0006108">
    <property type="term" value="P:malate metabolic process"/>
    <property type="evidence" value="ECO:0007669"/>
    <property type="project" value="InterPro"/>
</dbReference>
<dbReference type="GO" id="GO:0006099">
    <property type="term" value="P:tricarboxylic acid cycle"/>
    <property type="evidence" value="ECO:0007669"/>
    <property type="project" value="UniProtKB-UniRule"/>
</dbReference>
<dbReference type="CDD" id="cd01337">
    <property type="entry name" value="MDH_glyoxysomal_mitochondrial"/>
    <property type="match status" value="1"/>
</dbReference>
<dbReference type="FunFam" id="3.40.50.720:FF:000017">
    <property type="entry name" value="Malate dehydrogenase"/>
    <property type="match status" value="1"/>
</dbReference>
<dbReference type="FunFam" id="3.90.110.10:FF:000001">
    <property type="entry name" value="Malate dehydrogenase"/>
    <property type="match status" value="1"/>
</dbReference>
<dbReference type="Gene3D" id="3.90.110.10">
    <property type="entry name" value="Lactate dehydrogenase/glycoside hydrolase, family 4, C-terminal"/>
    <property type="match status" value="1"/>
</dbReference>
<dbReference type="Gene3D" id="3.40.50.720">
    <property type="entry name" value="NAD(P)-binding Rossmann-like Domain"/>
    <property type="match status" value="1"/>
</dbReference>
<dbReference type="HAMAP" id="MF_01516">
    <property type="entry name" value="Malate_dehydrog_1"/>
    <property type="match status" value="1"/>
</dbReference>
<dbReference type="InterPro" id="IPR001557">
    <property type="entry name" value="L-lactate/malate_DH"/>
</dbReference>
<dbReference type="InterPro" id="IPR022383">
    <property type="entry name" value="Lactate/malate_DH_C"/>
</dbReference>
<dbReference type="InterPro" id="IPR001236">
    <property type="entry name" value="Lactate/malate_DH_N"/>
</dbReference>
<dbReference type="InterPro" id="IPR015955">
    <property type="entry name" value="Lactate_DH/Glyco_Ohase_4_C"/>
</dbReference>
<dbReference type="InterPro" id="IPR001252">
    <property type="entry name" value="Malate_DH_AS"/>
</dbReference>
<dbReference type="InterPro" id="IPR010097">
    <property type="entry name" value="Malate_DH_type1"/>
</dbReference>
<dbReference type="InterPro" id="IPR023958">
    <property type="entry name" value="Malate_DH_type1_bac"/>
</dbReference>
<dbReference type="InterPro" id="IPR036291">
    <property type="entry name" value="NAD(P)-bd_dom_sf"/>
</dbReference>
<dbReference type="NCBIfam" id="TIGR01772">
    <property type="entry name" value="MDH_euk_gproteo"/>
    <property type="match status" value="1"/>
</dbReference>
<dbReference type="PANTHER" id="PTHR11540">
    <property type="entry name" value="MALATE AND LACTATE DEHYDROGENASE"/>
    <property type="match status" value="1"/>
</dbReference>
<dbReference type="PANTHER" id="PTHR11540:SF16">
    <property type="entry name" value="MALATE DEHYDROGENASE, MITOCHONDRIAL"/>
    <property type="match status" value="1"/>
</dbReference>
<dbReference type="Pfam" id="PF02866">
    <property type="entry name" value="Ldh_1_C"/>
    <property type="match status" value="1"/>
</dbReference>
<dbReference type="Pfam" id="PF00056">
    <property type="entry name" value="Ldh_1_N"/>
    <property type="match status" value="1"/>
</dbReference>
<dbReference type="PIRSF" id="PIRSF000102">
    <property type="entry name" value="Lac_mal_DH"/>
    <property type="match status" value="1"/>
</dbReference>
<dbReference type="SUPFAM" id="SSF56327">
    <property type="entry name" value="LDH C-terminal domain-like"/>
    <property type="match status" value="1"/>
</dbReference>
<dbReference type="SUPFAM" id="SSF51735">
    <property type="entry name" value="NAD(P)-binding Rossmann-fold domains"/>
    <property type="match status" value="1"/>
</dbReference>
<dbReference type="PROSITE" id="PS00068">
    <property type="entry name" value="MDH"/>
    <property type="match status" value="1"/>
</dbReference>
<evidence type="ECO:0000255" key="1">
    <source>
        <dbReference type="HAMAP-Rule" id="MF_01516"/>
    </source>
</evidence>
<comment type="function">
    <text evidence="1">Catalyzes the reversible oxidation of malate to oxaloacetate.</text>
</comment>
<comment type="catalytic activity">
    <reaction evidence="1">
        <text>(S)-malate + NAD(+) = oxaloacetate + NADH + H(+)</text>
        <dbReference type="Rhea" id="RHEA:21432"/>
        <dbReference type="ChEBI" id="CHEBI:15378"/>
        <dbReference type="ChEBI" id="CHEBI:15589"/>
        <dbReference type="ChEBI" id="CHEBI:16452"/>
        <dbReference type="ChEBI" id="CHEBI:57540"/>
        <dbReference type="ChEBI" id="CHEBI:57945"/>
        <dbReference type="EC" id="1.1.1.37"/>
    </reaction>
</comment>
<comment type="subunit">
    <text evidence="1">Homodimer.</text>
</comment>
<comment type="similarity">
    <text evidence="1">Belongs to the LDH/MDH superfamily. MDH type 1 family.</text>
</comment>
<keyword id="KW-0520">NAD</keyword>
<keyword id="KW-0560">Oxidoreductase</keyword>
<keyword id="KW-1185">Reference proteome</keyword>
<keyword id="KW-0816">Tricarboxylic acid cycle</keyword>
<gene>
    <name evidence="1" type="primary">mdh</name>
    <name type="ordered locus">SSON_3378</name>
</gene>
<protein>
    <recommendedName>
        <fullName evidence="1">Malate dehydrogenase</fullName>
        <ecNumber evidence="1">1.1.1.37</ecNumber>
    </recommendedName>
</protein>
<proteinExistence type="inferred from homology"/>
<name>MDH_SHISS</name>
<reference key="1">
    <citation type="journal article" date="2005" name="Nucleic Acids Res.">
        <title>Genome dynamics and diversity of Shigella species, the etiologic agents of bacillary dysentery.</title>
        <authorList>
            <person name="Yang F."/>
            <person name="Yang J."/>
            <person name="Zhang X."/>
            <person name="Chen L."/>
            <person name="Jiang Y."/>
            <person name="Yan Y."/>
            <person name="Tang X."/>
            <person name="Wang J."/>
            <person name="Xiong Z."/>
            <person name="Dong J."/>
            <person name="Xue Y."/>
            <person name="Zhu Y."/>
            <person name="Xu X."/>
            <person name="Sun L."/>
            <person name="Chen S."/>
            <person name="Nie H."/>
            <person name="Peng J."/>
            <person name="Xu J."/>
            <person name="Wang Y."/>
            <person name="Yuan Z."/>
            <person name="Wen Y."/>
            <person name="Yao Z."/>
            <person name="Shen Y."/>
            <person name="Qiang B."/>
            <person name="Hou Y."/>
            <person name="Yu J."/>
            <person name="Jin Q."/>
        </authorList>
    </citation>
    <scope>NUCLEOTIDE SEQUENCE [LARGE SCALE GENOMIC DNA]</scope>
    <source>
        <strain>Ss046</strain>
    </source>
</reference>
<accession>Q3YX11</accession>
<sequence length="312" mass="32337">MKVAVLGAAGGIGQALALLLKTQLPSGSELSLYDIAPVTPGVAVDLSHIPTAVKIKGFSGEDATPALEGADVVLISAGVARKPGMDRSDLFNVNAGIVKNLVQQVAKTCPKACIGIITNPVNTTVAIAAEVLKKAGVYDKNKLFGVTTLDIIRSNTFVAELKGKQPGEVEVPVIGGHSGVTILPLLSQVPGVSFTEQEVADLTKRIQNAGTEVVEAKAGGGSATLSMGQAAARFGLSLVRALQGEQGVVECAYVEGDGQYARFFSQPLLLGKNGVEERKSIGTLSAFEQNALEGMLDTLKKDIALGEEFVNK</sequence>
<feature type="chain" id="PRO_0000294311" description="Malate dehydrogenase">
    <location>
        <begin position="1"/>
        <end position="312"/>
    </location>
</feature>
<feature type="active site" description="Proton acceptor" evidence="1">
    <location>
        <position position="177"/>
    </location>
</feature>
<feature type="binding site" evidence="1">
    <location>
        <begin position="7"/>
        <end position="13"/>
    </location>
    <ligand>
        <name>NAD(+)</name>
        <dbReference type="ChEBI" id="CHEBI:57540"/>
    </ligand>
</feature>
<feature type="binding site" evidence="1">
    <location>
        <position position="34"/>
    </location>
    <ligand>
        <name>NAD(+)</name>
        <dbReference type="ChEBI" id="CHEBI:57540"/>
    </ligand>
</feature>
<feature type="binding site" evidence="1">
    <location>
        <position position="81"/>
    </location>
    <ligand>
        <name>substrate</name>
    </ligand>
</feature>
<feature type="binding site" evidence="1">
    <location>
        <position position="87"/>
    </location>
    <ligand>
        <name>substrate</name>
    </ligand>
</feature>
<feature type="binding site" evidence="1">
    <location>
        <position position="94"/>
    </location>
    <ligand>
        <name>NAD(+)</name>
        <dbReference type="ChEBI" id="CHEBI:57540"/>
    </ligand>
</feature>
<feature type="binding site" evidence="1">
    <location>
        <begin position="117"/>
        <end position="119"/>
    </location>
    <ligand>
        <name>NAD(+)</name>
        <dbReference type="ChEBI" id="CHEBI:57540"/>
    </ligand>
</feature>
<feature type="binding site" evidence="1">
    <location>
        <position position="119"/>
    </location>
    <ligand>
        <name>substrate</name>
    </ligand>
</feature>
<feature type="binding site" evidence="1">
    <location>
        <position position="153"/>
    </location>
    <ligand>
        <name>substrate</name>
    </ligand>
</feature>
<feature type="binding site" evidence="1">
    <location>
        <position position="227"/>
    </location>
    <ligand>
        <name>NAD(+)</name>
        <dbReference type="ChEBI" id="CHEBI:57540"/>
    </ligand>
</feature>